<reference key="1">
    <citation type="journal article" date="2015" name="Genome Announc.">
        <title>Draft genome sequence of the cellulolytic fungus Chaetomium globosum.</title>
        <authorList>
            <person name="Cuomo C.A."/>
            <person name="Untereiner W.A."/>
            <person name="Ma L.-J."/>
            <person name="Grabherr M."/>
            <person name="Birren B.W."/>
        </authorList>
    </citation>
    <scope>NUCLEOTIDE SEQUENCE [LARGE SCALE GENOMIC DNA]</scope>
    <source>
        <strain>ATCC 6205 / CBS 148.51 / DSM 1962 / NBRC 6347 / NRRL 1970</strain>
    </source>
</reference>
<name>AMPP1_CHAGB</name>
<evidence type="ECO:0000250" key="1"/>
<evidence type="ECO:0000305" key="2"/>
<feature type="chain" id="PRO_0000411786" description="Probable Xaa-Pro aminopeptidase P">
    <location>
        <begin position="1"/>
        <end position="624"/>
    </location>
</feature>
<feature type="binding site" evidence="1">
    <location>
        <position position="414"/>
    </location>
    <ligand>
        <name>Mn(2+)</name>
        <dbReference type="ChEBI" id="CHEBI:29035"/>
        <label>2</label>
    </ligand>
</feature>
<feature type="binding site" evidence="1">
    <location>
        <position position="425"/>
    </location>
    <ligand>
        <name>Mn(2+)</name>
        <dbReference type="ChEBI" id="CHEBI:29035"/>
        <label>1</label>
    </ligand>
</feature>
<feature type="binding site" evidence="1">
    <location>
        <position position="425"/>
    </location>
    <ligand>
        <name>Mn(2+)</name>
        <dbReference type="ChEBI" id="CHEBI:29035"/>
        <label>2</label>
    </ligand>
</feature>
<feature type="binding site" evidence="1">
    <location>
        <position position="530"/>
    </location>
    <ligand>
        <name>Mn(2+)</name>
        <dbReference type="ChEBI" id="CHEBI:29035"/>
        <label>1</label>
    </ligand>
</feature>
<feature type="binding site" evidence="1">
    <location>
        <position position="544"/>
    </location>
    <ligand>
        <name>Mn(2+)</name>
        <dbReference type="ChEBI" id="CHEBI:29035"/>
        <label>1</label>
    </ligand>
</feature>
<feature type="binding site" evidence="1">
    <location>
        <position position="544"/>
    </location>
    <ligand>
        <name>Mn(2+)</name>
        <dbReference type="ChEBI" id="CHEBI:29035"/>
        <label>2</label>
    </ligand>
</feature>
<protein>
    <recommendedName>
        <fullName>Probable Xaa-Pro aminopeptidase P</fullName>
        <shortName>AMPP</shortName>
        <shortName>Aminopeptidase P</shortName>
        <ecNumber>3.4.11.9</ecNumber>
    </recommendedName>
    <alternativeName>
        <fullName>Aminoacylproline aminopeptidase</fullName>
    </alternativeName>
    <alternativeName>
        <fullName>Prolidase</fullName>
    </alternativeName>
</protein>
<sequence length="624" mass="68186">METVNTTARLTTLRSLMKENGVDIYGIIVPSEDSHASEYIAPCDGRRAFISGFTGSAGTAVVTQDKAALATDGRYFNQAGKQLDGNWHLLKTGLQDVPTWQDWTAEASAGGKTVGVDPSLISSPIAEKLDESIKKSGGAGLKAVSENLVDPVWGSDRPARSSNPVKLLIGKYSGKDTAAKLTELRKELEKKKAAAFVLSMLDEVAWLFNLRGSDITYNPVFYSYAIVTQDSATLYVDVSKLDDESRSYLDQNKVTIKPYDTLFEDAKALASAAEAKGTSEAPRKYFVSNKGSWALKLALGGDKFVEEVRSPVGDAKAVKNDTELEGMRQCHIRDGVALIQFFAWLEDQLVNKKAVLDEVAAADQLEALRSKQTDFVGLSFDTISSTGPNAAVIHYKPEPGACSIIDPEAIYLCDSGAQFLDGTTDVTRTLHFGTPTAEQKKAYTLVLKGNIALDTAIFPKGTTGYAIDCLARQFLWASSPFSTKQGLDYRHGTGHGVGSYLNVHEGPIGIGTRKQYAEVALAAGNVLSIEPGFYEDGSYGIRIENLAMVREVKTEHSFGDKPFLGFEHVTMVPYCRKLIDEALLTAEEREWLNQSNKEIREKMAGRFDGDQLTQAWLERETQPF</sequence>
<dbReference type="EC" id="3.4.11.9"/>
<dbReference type="EMBL" id="CH408030">
    <property type="protein sequence ID" value="EAQ91437.1"/>
    <property type="molecule type" value="Genomic_DNA"/>
</dbReference>
<dbReference type="RefSeq" id="XP_001229888.1">
    <property type="nucleotide sequence ID" value="XM_001229887.1"/>
</dbReference>
<dbReference type="SMR" id="Q2H8T2"/>
<dbReference type="FunCoup" id="Q2H8T2">
    <property type="interactions" value="346"/>
</dbReference>
<dbReference type="STRING" id="306901.Q2H8T2"/>
<dbReference type="MEROPS" id="M24.009"/>
<dbReference type="GeneID" id="4388486"/>
<dbReference type="VEuPathDB" id="FungiDB:CHGG_03372"/>
<dbReference type="eggNOG" id="KOG2413">
    <property type="taxonomic scope" value="Eukaryota"/>
</dbReference>
<dbReference type="HOGENOM" id="CLU_011781_2_2_1"/>
<dbReference type="InParanoid" id="Q2H8T2"/>
<dbReference type="OMA" id="EPGMILS"/>
<dbReference type="OrthoDB" id="9995434at2759"/>
<dbReference type="Proteomes" id="UP000001056">
    <property type="component" value="Unassembled WGS sequence"/>
</dbReference>
<dbReference type="GO" id="GO:0005737">
    <property type="term" value="C:cytoplasm"/>
    <property type="evidence" value="ECO:0007669"/>
    <property type="project" value="UniProtKB-ARBA"/>
</dbReference>
<dbReference type="GO" id="GO:0046872">
    <property type="term" value="F:metal ion binding"/>
    <property type="evidence" value="ECO:0007669"/>
    <property type="project" value="UniProtKB-KW"/>
</dbReference>
<dbReference type="GO" id="GO:0070006">
    <property type="term" value="F:metalloaminopeptidase activity"/>
    <property type="evidence" value="ECO:0007669"/>
    <property type="project" value="InterPro"/>
</dbReference>
<dbReference type="GO" id="GO:0006508">
    <property type="term" value="P:proteolysis"/>
    <property type="evidence" value="ECO:0007669"/>
    <property type="project" value="UniProtKB-KW"/>
</dbReference>
<dbReference type="CDD" id="cd01085">
    <property type="entry name" value="APP"/>
    <property type="match status" value="1"/>
</dbReference>
<dbReference type="FunFam" id="3.40.350.10:FF:000010">
    <property type="entry name" value="Probable Xaa-Pro aminopeptidase P"/>
    <property type="match status" value="1"/>
</dbReference>
<dbReference type="FunFam" id="3.90.230.10:FF:000007">
    <property type="entry name" value="Xaa-Pro aminopeptidase P"/>
    <property type="match status" value="1"/>
</dbReference>
<dbReference type="FunFam" id="3.40.350.10:FF:000003">
    <property type="entry name" value="Xaa-pro aminopeptidase P"/>
    <property type="match status" value="1"/>
</dbReference>
<dbReference type="Gene3D" id="3.90.230.10">
    <property type="entry name" value="Creatinase/methionine aminopeptidase superfamily"/>
    <property type="match status" value="1"/>
</dbReference>
<dbReference type="Gene3D" id="3.40.350.10">
    <property type="entry name" value="Creatinase/prolidase N-terminal domain"/>
    <property type="match status" value="2"/>
</dbReference>
<dbReference type="InterPro" id="IPR029149">
    <property type="entry name" value="Creatin/AminoP/Spt16_N"/>
</dbReference>
<dbReference type="InterPro" id="IPR036005">
    <property type="entry name" value="Creatinase/aminopeptidase-like"/>
</dbReference>
<dbReference type="InterPro" id="IPR000587">
    <property type="entry name" value="Creatinase_N"/>
</dbReference>
<dbReference type="InterPro" id="IPR000994">
    <property type="entry name" value="Pept_M24"/>
</dbReference>
<dbReference type="InterPro" id="IPR033740">
    <property type="entry name" value="Pept_M24B"/>
</dbReference>
<dbReference type="InterPro" id="IPR032416">
    <property type="entry name" value="Peptidase_M24_C"/>
</dbReference>
<dbReference type="InterPro" id="IPR001131">
    <property type="entry name" value="Peptidase_M24B_aminopep-P_CS"/>
</dbReference>
<dbReference type="InterPro" id="IPR050422">
    <property type="entry name" value="X-Pro_aminopeptidase_P"/>
</dbReference>
<dbReference type="PANTHER" id="PTHR43763">
    <property type="entry name" value="XAA-PRO AMINOPEPTIDASE 1"/>
    <property type="match status" value="1"/>
</dbReference>
<dbReference type="PANTHER" id="PTHR43763:SF6">
    <property type="entry name" value="XAA-PRO AMINOPEPTIDASE 1"/>
    <property type="match status" value="1"/>
</dbReference>
<dbReference type="Pfam" id="PF01321">
    <property type="entry name" value="Creatinase_N"/>
    <property type="match status" value="1"/>
</dbReference>
<dbReference type="Pfam" id="PF16189">
    <property type="entry name" value="Creatinase_N_2"/>
    <property type="match status" value="1"/>
</dbReference>
<dbReference type="Pfam" id="PF00557">
    <property type="entry name" value="Peptidase_M24"/>
    <property type="match status" value="1"/>
</dbReference>
<dbReference type="Pfam" id="PF16188">
    <property type="entry name" value="Peptidase_M24_C"/>
    <property type="match status" value="1"/>
</dbReference>
<dbReference type="SUPFAM" id="SSF55920">
    <property type="entry name" value="Creatinase/aminopeptidase"/>
    <property type="match status" value="1"/>
</dbReference>
<dbReference type="SUPFAM" id="SSF53092">
    <property type="entry name" value="Creatinase/prolidase N-terminal domain"/>
    <property type="match status" value="1"/>
</dbReference>
<dbReference type="PROSITE" id="PS00491">
    <property type="entry name" value="PROLINE_PEPTIDASE"/>
    <property type="match status" value="1"/>
</dbReference>
<comment type="function">
    <text evidence="1">Catalyzes the removal of a penultimate prolyl residue from the N-termini of peptides.</text>
</comment>
<comment type="catalytic activity">
    <reaction>
        <text>Release of any N-terminal amino acid, including proline, that is linked to proline, even from a dipeptide or tripeptide.</text>
        <dbReference type="EC" id="3.4.11.9"/>
    </reaction>
</comment>
<comment type="cofactor">
    <cofactor evidence="1">
        <name>Mn(2+)</name>
        <dbReference type="ChEBI" id="CHEBI:29035"/>
    </cofactor>
    <text evidence="1">Binds 2 manganese ions per subunit.</text>
</comment>
<comment type="similarity">
    <text evidence="2">Belongs to the peptidase M24B family.</text>
</comment>
<keyword id="KW-0031">Aminopeptidase</keyword>
<keyword id="KW-0378">Hydrolase</keyword>
<keyword id="KW-0464">Manganese</keyword>
<keyword id="KW-0479">Metal-binding</keyword>
<keyword id="KW-0482">Metalloprotease</keyword>
<keyword id="KW-0645">Protease</keyword>
<keyword id="KW-1185">Reference proteome</keyword>
<organism>
    <name type="scientific">Chaetomium globosum (strain ATCC 6205 / CBS 148.51 / DSM 1962 / NBRC 6347 / NRRL 1970)</name>
    <name type="common">Soil fungus</name>
    <dbReference type="NCBI Taxonomy" id="306901"/>
    <lineage>
        <taxon>Eukaryota</taxon>
        <taxon>Fungi</taxon>
        <taxon>Dikarya</taxon>
        <taxon>Ascomycota</taxon>
        <taxon>Pezizomycotina</taxon>
        <taxon>Sordariomycetes</taxon>
        <taxon>Sordariomycetidae</taxon>
        <taxon>Sordariales</taxon>
        <taxon>Chaetomiaceae</taxon>
        <taxon>Chaetomium</taxon>
    </lineage>
</organism>
<gene>
    <name type="primary">AMPP</name>
    <name type="ORF">CHGG_03372</name>
</gene>
<accession>Q2H8T2</accession>
<proteinExistence type="inferred from homology"/>